<comment type="function">
    <text evidence="4 5 6 11">Trans-enoyl reductase; part of the gene cluster A that mediates the biosynthesis of botcinic acid and its botcinin derivatives, acetate-derived polyketides that contribute to virulence when combined with the sesquiterpene botrydial (PubMed:18208491, PubMed:21722295). Botcinic acid and its derivatives have been shown to induce chlorosis and necrosis during host plant infection, but also have antifungal activities (PubMed:18208491, PubMed:21722295). Two polyketide synthases, BOA6 and BOA9, are involved in the biosynthesis of botcinins. BOA6 mediates the formation of the per-methylated tetraketide core by condensation of four units of malonyl-CoA with one unit of acetyl-CoA, which would be methylated in activated methylene groups to yield a bicyclic acid intermediate that could then either be converted to botrylactone derivatives or lose the starter acetate unit through a retro-Claisen type C-C bond cleavage to yield botcinin derivatives (PubMed:23203902). The second polyketide synthase, BOA9, is probably required for the biosynthesis of the tetraketide side chain of botcinins (Probable). The methyltransferase (MT) domain within BOA6 is probably responsible for the incorporation of four methyl groups (Probable). The trans-enoyl reductase BOA5 might take over the enoyl reductase function of BOA6 that misses an ER domain (Probable). The monooxygenases BOA2, BOA3 and BOA4 might be involved in further hydroxylations at C4, C5 and C8, whereas BOA7, close to BOA9, could potentially be involved in the hydroxylation at C4 in the side chain of botcinins (Probable).</text>
</comment>
<comment type="pathway">
    <text evidence="10">Polyketide biosynthesis.</text>
</comment>
<comment type="subunit">
    <text evidence="1">Monomer.</text>
</comment>
<comment type="induction">
    <text evidence="4 5">Expression of the botcinic acid clusters genes BOA1-13 and BOA17 is coregulated by BCG1 during both in vitro and in planta growth.</text>
</comment>
<comment type="domain">
    <text evidence="10">BOA5 is composed of an enoyl reductase (ER) domain and presumably acts in concert with the polyketide synthase BOA6 that misses an ER domain.</text>
</comment>
<comment type="similarity">
    <text evidence="9">Belongs to the zinc-containing alcohol dehydrogenase family.</text>
</comment>
<name>BOA5_BOTFB</name>
<proteinExistence type="evidence at transcript level"/>
<gene>
    <name evidence="8" type="primary">BOA5</name>
    <name evidence="7" type="synonym">OxR</name>
</gene>
<reference key="1">
    <citation type="journal article" date="2008" name="Mol. Microbiol.">
        <title>The Galpha subunit BCG1, the phospholipase C (BcPLC1) and the calcineurin phosphatase co-ordinately regulate gene expression in the grey mould fungus Botrytis cinerea.</title>
        <authorList>
            <person name="Schumacher J."/>
            <person name="Viaud M."/>
            <person name="Simon A."/>
            <person name="Tudzynski B."/>
        </authorList>
    </citation>
    <scope>NUCLEOTIDE SEQUENCE [GENOMIC DNA]</scope>
    <scope>INDUCTION</scope>
    <source>
        <strain>B05.10</strain>
    </source>
</reference>
<reference key="2">
    <citation type="journal article" date="2011" name="Mol. Plant Pathol.">
        <title>The Botrytis cinerea phytotoxin botcinic acid requires two polyketide synthases for production and has a redundant role in virulence with botrydial.</title>
        <authorList>
            <person name="Dalmais B."/>
            <person name="Schumacher J."/>
            <person name="Moraga J."/>
            <person name="Le Pecheur P."/>
            <person name="Tudzynski B."/>
            <person name="Collado I.G."/>
            <person name="Viaud M."/>
        </authorList>
    </citation>
    <scope>FUNCTION</scope>
    <scope>INDUCTION</scope>
    <scope>DOMAIN</scope>
    <scope>PATHWAY</scope>
</reference>
<reference key="3">
    <citation type="journal article" date="2013" name="ChemBioChem">
        <title>A shared biosynthetic pathway for botcinins and botrylactones revealed through gene deletions.</title>
        <authorList>
            <person name="Massaroli M."/>
            <person name="Moraga J."/>
            <person name="Bastos Borges K."/>
            <person name="Ramirez-Fernandez J."/>
            <person name="Viaud M."/>
            <person name="Gonzalez Collado I."/>
            <person name="Duran-Patron R."/>
            <person name="Hernandez-Galan R."/>
        </authorList>
    </citation>
    <scope>FUNCTION</scope>
</reference>
<evidence type="ECO:0000250" key="1">
    <source>
        <dbReference type="UniProtKB" id="Q9Y7D0"/>
    </source>
</evidence>
<evidence type="ECO:0000255" key="2"/>
<evidence type="ECO:0000256" key="3">
    <source>
        <dbReference type="SAM" id="MobiDB-lite"/>
    </source>
</evidence>
<evidence type="ECO:0000269" key="4">
    <source>
    </source>
</evidence>
<evidence type="ECO:0000269" key="5">
    <source>
    </source>
</evidence>
<evidence type="ECO:0000269" key="6">
    <source>
    </source>
</evidence>
<evidence type="ECO:0000303" key="7">
    <source>
    </source>
</evidence>
<evidence type="ECO:0000303" key="8">
    <source>
    </source>
</evidence>
<evidence type="ECO:0000305" key="9"/>
<evidence type="ECO:0000305" key="10">
    <source>
    </source>
</evidence>
<evidence type="ECO:0000305" key="11">
    <source>
    </source>
</evidence>
<feature type="chain" id="PRO_0000444656" description="Trans-enoyl reductase BOA5">
    <location>
        <begin position="1"/>
        <end position="375"/>
    </location>
</feature>
<feature type="region of interest" description="Disordered" evidence="3">
    <location>
        <begin position="1"/>
        <end position="21"/>
    </location>
</feature>
<feature type="region of interest" description="Disordered" evidence="3">
    <location>
        <begin position="147"/>
        <end position="168"/>
    </location>
</feature>
<feature type="compositionally biased region" description="Polar residues" evidence="3">
    <location>
        <begin position="1"/>
        <end position="16"/>
    </location>
</feature>
<feature type="binding site" evidence="1">
    <location>
        <begin position="42"/>
        <end position="45"/>
    </location>
    <ligand>
        <name>NADP(+)</name>
        <dbReference type="ChEBI" id="CHEBI:58349"/>
    </ligand>
</feature>
<feature type="binding site" evidence="2">
    <location>
        <begin position="121"/>
        <end position="128"/>
    </location>
    <ligand>
        <name>substrate</name>
    </ligand>
</feature>
<feature type="binding site" evidence="1">
    <location>
        <begin position="185"/>
        <end position="188"/>
    </location>
    <ligand>
        <name>NADP(+)</name>
        <dbReference type="ChEBI" id="CHEBI:58349"/>
    </ligand>
</feature>
<feature type="binding site" evidence="1">
    <location>
        <begin position="208"/>
        <end position="211"/>
    </location>
    <ligand>
        <name>NADP(+)</name>
        <dbReference type="ChEBI" id="CHEBI:58349"/>
    </ligand>
</feature>
<feature type="binding site" evidence="1">
    <location>
        <position position="226"/>
    </location>
    <ligand>
        <name>NADP(+)</name>
        <dbReference type="ChEBI" id="CHEBI:58349"/>
    </ligand>
</feature>
<feature type="binding site" evidence="1">
    <location>
        <begin position="273"/>
        <end position="274"/>
    </location>
    <ligand>
        <name>NADP(+)</name>
        <dbReference type="ChEBI" id="CHEBI:58349"/>
    </ligand>
</feature>
<feature type="binding site" evidence="2">
    <location>
        <begin position="294"/>
        <end position="298"/>
    </location>
    <ligand>
        <name>substrate</name>
    </ligand>
</feature>
<feature type="binding site" evidence="1">
    <location>
        <begin position="363"/>
        <end position="364"/>
    </location>
    <ligand>
        <name>NADP(+)</name>
        <dbReference type="ChEBI" id="CHEBI:58349"/>
    </ligand>
</feature>
<sequence length="375" mass="39899">MQAVIQTGPGTLQLTENVPKPSVEPGSRKVLVKVHAVALNHSDWKMVDFSAKPGAISGYDMAGVLEAIDDSMNSDLAVGDRVLGVTSIHGGAFAEYVVTDGDLLVKIPENMDFQHAASYGVGIVTTGLALYGNECLALNWPNTDGTGSAAPQKTRVGPRGWSGGDALTDNDNETPRIPVLVYGASTSTGTLAIQLLKLSGYEPIAVCSPHNFGLVQSRGASKCFDYHSQGCGAMIKQYTYNRLEYALDCITTASSMRLCYEAIGATGGKYVSLDPFNARVQRSRADVKPFFCYALTIFGLPIELSGEFARGAKPEDRKLAEKFVKIAEKLIEKGRLKAHPTMLKSGGLGGIASSIDLLRKGKVSGSKLVFDVVGN</sequence>
<accession>B1GVX6</accession>
<keyword id="KW-0521">NADP</keyword>
<keyword id="KW-0547">Nucleotide-binding</keyword>
<keyword id="KW-0560">Oxidoreductase</keyword>
<keyword id="KW-0843">Virulence</keyword>
<organism>
    <name type="scientific">Botryotinia fuckeliana (strain B05.10)</name>
    <name type="common">Noble rot fungus</name>
    <name type="synonym">Botrytis cinerea</name>
    <dbReference type="NCBI Taxonomy" id="332648"/>
    <lineage>
        <taxon>Eukaryota</taxon>
        <taxon>Fungi</taxon>
        <taxon>Dikarya</taxon>
        <taxon>Ascomycota</taxon>
        <taxon>Pezizomycotina</taxon>
        <taxon>Leotiomycetes</taxon>
        <taxon>Helotiales</taxon>
        <taxon>Sclerotiniaceae</taxon>
        <taxon>Botrytis</taxon>
    </lineage>
</organism>
<dbReference type="EC" id="1.-.-.-" evidence="10"/>
<dbReference type="EMBL" id="AM930231">
    <property type="protein sequence ID" value="CAP58785.1"/>
    <property type="molecule type" value="Genomic_DNA"/>
</dbReference>
<dbReference type="SMR" id="B1GVX6"/>
<dbReference type="GO" id="GO:0000166">
    <property type="term" value="F:nucleotide binding"/>
    <property type="evidence" value="ECO:0007669"/>
    <property type="project" value="UniProtKB-KW"/>
</dbReference>
<dbReference type="GO" id="GO:0016651">
    <property type="term" value="F:oxidoreductase activity, acting on NAD(P)H"/>
    <property type="evidence" value="ECO:0007669"/>
    <property type="project" value="InterPro"/>
</dbReference>
<dbReference type="CDD" id="cd08249">
    <property type="entry name" value="enoyl_reductase_like"/>
    <property type="match status" value="1"/>
</dbReference>
<dbReference type="Gene3D" id="3.90.180.10">
    <property type="entry name" value="Medium-chain alcohol dehydrogenases, catalytic domain"/>
    <property type="match status" value="1"/>
</dbReference>
<dbReference type="Gene3D" id="3.40.50.720">
    <property type="entry name" value="NAD(P)-binding Rossmann-like Domain"/>
    <property type="match status" value="1"/>
</dbReference>
<dbReference type="InterPro" id="IPR013154">
    <property type="entry name" value="ADH-like_N"/>
</dbReference>
<dbReference type="InterPro" id="IPR011032">
    <property type="entry name" value="GroES-like_sf"/>
</dbReference>
<dbReference type="InterPro" id="IPR036291">
    <property type="entry name" value="NAD(P)-bd_dom_sf"/>
</dbReference>
<dbReference type="InterPro" id="IPR020843">
    <property type="entry name" value="PKS_ER"/>
</dbReference>
<dbReference type="InterPro" id="IPR047122">
    <property type="entry name" value="Trans-enoyl_RdTase-like"/>
</dbReference>
<dbReference type="PANTHER" id="PTHR45348">
    <property type="entry name" value="HYPOTHETICAL OXIDOREDUCTASE (EUROFUNG)"/>
    <property type="match status" value="1"/>
</dbReference>
<dbReference type="PANTHER" id="PTHR45348:SF6">
    <property type="entry name" value="TRANS-ENOYL REDUCTASE APDC"/>
    <property type="match status" value="1"/>
</dbReference>
<dbReference type="Pfam" id="PF08240">
    <property type="entry name" value="ADH_N"/>
    <property type="match status" value="1"/>
</dbReference>
<dbReference type="SMART" id="SM00829">
    <property type="entry name" value="PKS_ER"/>
    <property type="match status" value="1"/>
</dbReference>
<dbReference type="SUPFAM" id="SSF50129">
    <property type="entry name" value="GroES-like"/>
    <property type="match status" value="1"/>
</dbReference>
<dbReference type="SUPFAM" id="SSF51735">
    <property type="entry name" value="NAD(P)-binding Rossmann-fold domains"/>
    <property type="match status" value="1"/>
</dbReference>
<protein>
    <recommendedName>
        <fullName evidence="8">Trans-enoyl reductase BOA5</fullName>
        <ecNumber evidence="10">1.-.-.-</ecNumber>
    </recommendedName>
    <alternativeName>
        <fullName evidence="8">Botcinic acid biosynthesis cluster A protein 5</fullName>
    </alternativeName>
</protein>